<proteinExistence type="evidence at protein level"/>
<evidence type="ECO:0000255" key="1"/>
<evidence type="ECO:0000269" key="2">
    <source>
    </source>
</evidence>
<evidence type="ECO:0000269" key="3">
    <source>
    </source>
</evidence>
<evidence type="ECO:0000269" key="4">
    <source>
    </source>
</evidence>
<evidence type="ECO:0000305" key="5"/>
<evidence type="ECO:0007744" key="6">
    <source>
        <dbReference type="PDB" id="1T12"/>
    </source>
</evidence>
<evidence type="ECO:0007829" key="7">
    <source>
        <dbReference type="PDB" id="1T12"/>
    </source>
</evidence>
<reference key="1">
    <citation type="journal article" date="1992" name="Plant J.">
        <title>Expression pattern of a tobacco lipid transfer protein gene within the shoot apex.</title>
        <authorList>
            <person name="Fleming A.J."/>
            <person name="Mandel T."/>
            <person name="Hofmann S."/>
            <person name="Sterk P."/>
            <person name="de Vries S.C."/>
            <person name="Kuhlemeier C."/>
        </authorList>
    </citation>
    <scope>NUCLEOTIDE SEQUENCE [GENOMIC DNA]</scope>
    <source>
        <strain>cv. Samsun</strain>
    </source>
</reference>
<reference key="2">
    <citation type="journal article" date="1996" name="Plant Physiol.">
        <title>Tissue-specific expression and promoter analysis of the tobacco Ltp1 gene.</title>
        <authorList>
            <person name="Canevascini S."/>
            <person name="Caderas D."/>
            <person name="Mandel T."/>
            <person name="Fleming A.J."/>
            <person name="Dupuis I."/>
            <person name="Kuhlemeier C."/>
        </authorList>
    </citation>
    <scope>TISSUE SPECIFICITY</scope>
</reference>
<reference key="3">
    <citation type="journal article" date="2004" name="Mol. Biol. Cell">
        <title>Modulation of the biological activity of a tobacco LTP1 by lipid complexation.</title>
        <authorList>
            <person name="Buhot N."/>
            <person name="Gomes E."/>
            <person name="Milat M.L."/>
            <person name="Ponchet M."/>
            <person name="Marion D."/>
            <person name="Lequeu J."/>
            <person name="Delrot S."/>
            <person name="Coutos-Thevenot P."/>
            <person name="Blein J.P."/>
        </authorList>
    </citation>
    <scope>FUNCTION</scope>
</reference>
<reference key="4">
    <citation type="journal article" date="2005" name="Proteins">
        <title>Solution structure of a tobacco lipid transfer protein exhibiting new biophysical and biological features.</title>
        <authorList>
            <person name="Da Silva P."/>
            <person name="Landon C."/>
            <person name="Industri B."/>
            <person name="Marais A."/>
            <person name="Marion D."/>
            <person name="Ponchet M."/>
            <person name="Vovelle F."/>
        </authorList>
    </citation>
    <scope>STRUCTURE BY NMR OF 24-114</scope>
    <scope>DISULFIDE BONDS</scope>
</reference>
<comment type="function">
    <text evidence="2">Plant non-specific lipid-transfer proteins transfer phospholipids as well as galactolipids across membranes. Binds cis-unsaturated fatty acids and jasmonic acid with a higher affinity than linear chain fatty acids. Formation of the complex with jasmonic acid results in a conformational change facilitating the LPT1 binding on the elicitin plasma membrane receptor that is known to be involved in plant defense induction. May also play a role in wax or cutin deposition in the cell walls of expanding epidermal cells and certain secretory tissues.</text>
</comment>
<comment type="tissue specificity">
    <text evidence="4">High expression in leaf epidermis and shoot apex, and also in root epidermis during seedling germination.</text>
</comment>
<comment type="similarity">
    <text evidence="5">Belongs to the plant LTP family.</text>
</comment>
<organism>
    <name type="scientific">Nicotiana tabacum</name>
    <name type="common">Common tobacco</name>
    <dbReference type="NCBI Taxonomy" id="4097"/>
    <lineage>
        <taxon>Eukaryota</taxon>
        <taxon>Viridiplantae</taxon>
        <taxon>Streptophyta</taxon>
        <taxon>Embryophyta</taxon>
        <taxon>Tracheophyta</taxon>
        <taxon>Spermatophyta</taxon>
        <taxon>Magnoliopsida</taxon>
        <taxon>eudicotyledons</taxon>
        <taxon>Gunneridae</taxon>
        <taxon>Pentapetalae</taxon>
        <taxon>asterids</taxon>
        <taxon>lamiids</taxon>
        <taxon>Solanales</taxon>
        <taxon>Solanaceae</taxon>
        <taxon>Nicotianoideae</taxon>
        <taxon>Nicotianeae</taxon>
        <taxon>Nicotiana</taxon>
    </lineage>
</organism>
<protein>
    <recommendedName>
        <fullName>Non-specific lipid-transfer protein 1</fullName>
        <shortName>LTP 1</shortName>
    </recommendedName>
    <alternativeName>
        <fullName>Pathogenesis-related protein 14</fullName>
        <shortName>PR-14</shortName>
    </alternativeName>
</protein>
<keyword id="KW-0002">3D-structure</keyword>
<keyword id="KW-1015">Disulfide bond</keyword>
<keyword id="KW-0446">Lipid-binding</keyword>
<keyword id="KW-0568">Pathogenesis-related protein</keyword>
<keyword id="KW-0611">Plant defense</keyword>
<keyword id="KW-1185">Reference proteome</keyword>
<keyword id="KW-0732">Signal</keyword>
<keyword id="KW-0813">Transport</keyword>
<accession>Q42952</accession>
<feature type="signal peptide" evidence="1">
    <location>
        <begin position="1"/>
        <end position="23"/>
    </location>
</feature>
<feature type="chain" id="PRO_0000018411" description="Non-specific lipid-transfer protein 1">
    <location>
        <begin position="24"/>
        <end position="114"/>
    </location>
</feature>
<feature type="disulfide bond" evidence="3 6">
    <location>
        <begin position="27"/>
        <end position="73"/>
    </location>
</feature>
<feature type="disulfide bond" evidence="3 6">
    <location>
        <begin position="37"/>
        <end position="50"/>
    </location>
</feature>
<feature type="disulfide bond" evidence="3 6">
    <location>
        <begin position="51"/>
        <end position="96"/>
    </location>
</feature>
<feature type="disulfide bond" evidence="3 6">
    <location>
        <begin position="71"/>
        <end position="110"/>
    </location>
</feature>
<feature type="helix" evidence="7">
    <location>
        <begin position="27"/>
        <end position="33"/>
    </location>
</feature>
<feature type="helix" evidence="7">
    <location>
        <begin position="35"/>
        <end position="41"/>
    </location>
</feature>
<feature type="helix" evidence="7">
    <location>
        <begin position="50"/>
        <end position="59"/>
    </location>
</feature>
<feature type="helix" evidence="7">
    <location>
        <begin position="65"/>
        <end position="80"/>
    </location>
</feature>
<feature type="helix" evidence="7">
    <location>
        <begin position="86"/>
        <end position="95"/>
    </location>
</feature>
<feature type="strand" evidence="7">
    <location>
        <begin position="104"/>
        <end position="108"/>
    </location>
</feature>
<dbReference type="EMBL" id="X62395">
    <property type="protein sequence ID" value="CAA44267.1"/>
    <property type="molecule type" value="Genomic_DNA"/>
</dbReference>
<dbReference type="PIR" id="S22168">
    <property type="entry name" value="S22168"/>
</dbReference>
<dbReference type="PDB" id="1T12">
    <property type="method" value="NMR"/>
    <property type="chains" value="A=24-114"/>
</dbReference>
<dbReference type="PDBsum" id="1T12"/>
<dbReference type="SMR" id="Q42952"/>
<dbReference type="STRING" id="4097.Q42952"/>
<dbReference type="PaxDb" id="4097-Q42952"/>
<dbReference type="GeneID" id="107812329"/>
<dbReference type="KEGG" id="nta:107812329"/>
<dbReference type="OMA" id="ISPCLAY"/>
<dbReference type="OrthoDB" id="1890443at2759"/>
<dbReference type="EvolutionaryTrace" id="Q42952"/>
<dbReference type="Proteomes" id="UP000084051">
    <property type="component" value="Unplaced"/>
</dbReference>
<dbReference type="GO" id="GO:0008289">
    <property type="term" value="F:lipid binding"/>
    <property type="evidence" value="ECO:0007669"/>
    <property type="project" value="UniProtKB-KW"/>
</dbReference>
<dbReference type="GO" id="GO:0006952">
    <property type="term" value="P:defense response"/>
    <property type="evidence" value="ECO:0007669"/>
    <property type="project" value="UniProtKB-KW"/>
</dbReference>
<dbReference type="GO" id="GO:0006869">
    <property type="term" value="P:lipid transport"/>
    <property type="evidence" value="ECO:0007669"/>
    <property type="project" value="InterPro"/>
</dbReference>
<dbReference type="CDD" id="cd01960">
    <property type="entry name" value="nsLTP1"/>
    <property type="match status" value="1"/>
</dbReference>
<dbReference type="FunFam" id="1.10.110.10:FF:000002">
    <property type="entry name" value="Non-specific lipid-transfer protein"/>
    <property type="match status" value="1"/>
</dbReference>
<dbReference type="Gene3D" id="1.10.110.10">
    <property type="entry name" value="Plant lipid-transfer and hydrophobic proteins"/>
    <property type="match status" value="1"/>
</dbReference>
<dbReference type="InterPro" id="IPR036312">
    <property type="entry name" value="Bifun_inhib/LTP/seed_sf"/>
</dbReference>
<dbReference type="InterPro" id="IPR016140">
    <property type="entry name" value="Bifunc_inhib/LTP/seed_store"/>
</dbReference>
<dbReference type="InterPro" id="IPR000528">
    <property type="entry name" value="Plant_nsLTP"/>
</dbReference>
<dbReference type="PANTHER" id="PTHR33076">
    <property type="entry name" value="NON-SPECIFIC LIPID-TRANSFER PROTEIN 2-RELATED"/>
    <property type="match status" value="1"/>
</dbReference>
<dbReference type="Pfam" id="PF00234">
    <property type="entry name" value="Tryp_alpha_amyl"/>
    <property type="match status" value="1"/>
</dbReference>
<dbReference type="PRINTS" id="PR00382">
    <property type="entry name" value="LIPIDTRNSFER"/>
</dbReference>
<dbReference type="SMART" id="SM00499">
    <property type="entry name" value="AAI"/>
    <property type="match status" value="1"/>
</dbReference>
<dbReference type="SUPFAM" id="SSF47699">
    <property type="entry name" value="Bifunctional inhibitor/lipid-transfer protein/seed storage 2S albumin"/>
    <property type="match status" value="1"/>
</dbReference>
<dbReference type="PROSITE" id="PS00597">
    <property type="entry name" value="PLANT_LTP"/>
    <property type="match status" value="1"/>
</dbReference>
<sequence length="114" mass="11524">MEIAGKIACFVVLCMVVAAPCAEAITCGQVTSNLAPCLAYLRNTGPLGRCCGGVKALVNSARTTEDRQIACTCLKSAAGAISGINLGKAAGLPSTCGVNIPYKISPSTDCSKVQ</sequence>
<gene>
    <name type="primary">LTP1</name>
</gene>
<name>NLTP1_TOBAC</name>